<feature type="chain" id="PRO_1000070916" description="Argininosuccinate synthase">
    <location>
        <begin position="1"/>
        <end position="401"/>
    </location>
</feature>
<feature type="binding site" evidence="1">
    <location>
        <begin position="8"/>
        <end position="16"/>
    </location>
    <ligand>
        <name>ATP</name>
        <dbReference type="ChEBI" id="CHEBI:30616"/>
    </ligand>
</feature>
<feature type="binding site" evidence="1">
    <location>
        <position position="85"/>
    </location>
    <ligand>
        <name>L-citrulline</name>
        <dbReference type="ChEBI" id="CHEBI:57743"/>
    </ligand>
</feature>
<feature type="binding site" evidence="1">
    <location>
        <position position="115"/>
    </location>
    <ligand>
        <name>ATP</name>
        <dbReference type="ChEBI" id="CHEBI:30616"/>
    </ligand>
</feature>
<feature type="binding site" evidence="1">
    <location>
        <position position="117"/>
    </location>
    <ligand>
        <name>L-aspartate</name>
        <dbReference type="ChEBI" id="CHEBI:29991"/>
    </ligand>
</feature>
<feature type="binding site" evidence="1">
    <location>
        <position position="121"/>
    </location>
    <ligand>
        <name>L-aspartate</name>
        <dbReference type="ChEBI" id="CHEBI:29991"/>
    </ligand>
</feature>
<feature type="binding site" evidence="1">
    <location>
        <position position="121"/>
    </location>
    <ligand>
        <name>L-citrulline</name>
        <dbReference type="ChEBI" id="CHEBI:57743"/>
    </ligand>
</feature>
<feature type="binding site" evidence="1">
    <location>
        <position position="122"/>
    </location>
    <ligand>
        <name>L-aspartate</name>
        <dbReference type="ChEBI" id="CHEBI:29991"/>
    </ligand>
</feature>
<feature type="binding site" evidence="1">
    <location>
        <position position="125"/>
    </location>
    <ligand>
        <name>L-citrulline</name>
        <dbReference type="ChEBI" id="CHEBI:57743"/>
    </ligand>
</feature>
<feature type="binding site" evidence="1">
    <location>
        <position position="173"/>
    </location>
    <ligand>
        <name>L-citrulline</name>
        <dbReference type="ChEBI" id="CHEBI:57743"/>
    </ligand>
</feature>
<feature type="binding site" evidence="1">
    <location>
        <position position="258"/>
    </location>
    <ligand>
        <name>L-citrulline</name>
        <dbReference type="ChEBI" id="CHEBI:57743"/>
    </ligand>
</feature>
<feature type="binding site" evidence="1">
    <location>
        <position position="270"/>
    </location>
    <ligand>
        <name>L-citrulline</name>
        <dbReference type="ChEBI" id="CHEBI:57743"/>
    </ligand>
</feature>
<gene>
    <name evidence="1" type="primary">argG</name>
    <name type="ordered locus">NWMN_0832</name>
</gene>
<reference key="1">
    <citation type="journal article" date="2008" name="J. Bacteriol.">
        <title>Genome sequence of Staphylococcus aureus strain Newman and comparative analysis of staphylococcal genomes: polymorphism and evolution of two major pathogenicity islands.</title>
        <authorList>
            <person name="Baba T."/>
            <person name="Bae T."/>
            <person name="Schneewind O."/>
            <person name="Takeuchi F."/>
            <person name="Hiramatsu K."/>
        </authorList>
    </citation>
    <scope>NUCLEOTIDE SEQUENCE [LARGE SCALE GENOMIC DNA]</scope>
    <source>
        <strain>Newman</strain>
    </source>
</reference>
<name>ASSY_STAAE</name>
<dbReference type="EC" id="6.3.4.5" evidence="1"/>
<dbReference type="EMBL" id="AP009351">
    <property type="protein sequence ID" value="BAF67104.1"/>
    <property type="molecule type" value="Genomic_DNA"/>
</dbReference>
<dbReference type="RefSeq" id="WP_000660045.1">
    <property type="nucleotide sequence ID" value="NZ_JBBIAE010000002.1"/>
</dbReference>
<dbReference type="SMR" id="A6QFH2"/>
<dbReference type="KEGG" id="sae:NWMN_0832"/>
<dbReference type="HOGENOM" id="CLU_032784_4_2_9"/>
<dbReference type="UniPathway" id="UPA00068">
    <property type="reaction ID" value="UER00113"/>
</dbReference>
<dbReference type="Proteomes" id="UP000006386">
    <property type="component" value="Chromosome"/>
</dbReference>
<dbReference type="GO" id="GO:0005737">
    <property type="term" value="C:cytoplasm"/>
    <property type="evidence" value="ECO:0007669"/>
    <property type="project" value="UniProtKB-SubCell"/>
</dbReference>
<dbReference type="GO" id="GO:0004055">
    <property type="term" value="F:argininosuccinate synthase activity"/>
    <property type="evidence" value="ECO:0007669"/>
    <property type="project" value="UniProtKB-UniRule"/>
</dbReference>
<dbReference type="GO" id="GO:0005524">
    <property type="term" value="F:ATP binding"/>
    <property type="evidence" value="ECO:0007669"/>
    <property type="project" value="UniProtKB-UniRule"/>
</dbReference>
<dbReference type="GO" id="GO:0000053">
    <property type="term" value="P:argininosuccinate metabolic process"/>
    <property type="evidence" value="ECO:0007669"/>
    <property type="project" value="TreeGrafter"/>
</dbReference>
<dbReference type="GO" id="GO:0006526">
    <property type="term" value="P:L-arginine biosynthetic process"/>
    <property type="evidence" value="ECO:0007669"/>
    <property type="project" value="UniProtKB-UniRule"/>
</dbReference>
<dbReference type="GO" id="GO:0000050">
    <property type="term" value="P:urea cycle"/>
    <property type="evidence" value="ECO:0007669"/>
    <property type="project" value="TreeGrafter"/>
</dbReference>
<dbReference type="CDD" id="cd01999">
    <property type="entry name" value="ASS"/>
    <property type="match status" value="1"/>
</dbReference>
<dbReference type="FunFam" id="1.20.5.470:FF:000002">
    <property type="entry name" value="Argininosuccinate synthase"/>
    <property type="match status" value="1"/>
</dbReference>
<dbReference type="FunFam" id="3.40.50.620:FF:000038">
    <property type="entry name" value="Argininosuccinate synthase"/>
    <property type="match status" value="1"/>
</dbReference>
<dbReference type="FunFam" id="3.90.1260.10:FF:000007">
    <property type="entry name" value="Argininosuccinate synthase"/>
    <property type="match status" value="1"/>
</dbReference>
<dbReference type="Gene3D" id="3.90.1260.10">
    <property type="entry name" value="Argininosuccinate synthetase, chain A, domain 2"/>
    <property type="match status" value="1"/>
</dbReference>
<dbReference type="Gene3D" id="3.40.50.620">
    <property type="entry name" value="HUPs"/>
    <property type="match status" value="1"/>
</dbReference>
<dbReference type="Gene3D" id="1.20.5.470">
    <property type="entry name" value="Single helix bin"/>
    <property type="match status" value="1"/>
</dbReference>
<dbReference type="HAMAP" id="MF_00005">
    <property type="entry name" value="Arg_succ_synth_type1"/>
    <property type="match status" value="1"/>
</dbReference>
<dbReference type="InterPro" id="IPR048268">
    <property type="entry name" value="Arginosuc_syn_C"/>
</dbReference>
<dbReference type="InterPro" id="IPR048267">
    <property type="entry name" value="Arginosuc_syn_N"/>
</dbReference>
<dbReference type="InterPro" id="IPR001518">
    <property type="entry name" value="Arginosuc_synth"/>
</dbReference>
<dbReference type="InterPro" id="IPR018223">
    <property type="entry name" value="Arginosuc_synth_CS"/>
</dbReference>
<dbReference type="InterPro" id="IPR023434">
    <property type="entry name" value="Arginosuc_synth_type_1_subfam"/>
</dbReference>
<dbReference type="InterPro" id="IPR024074">
    <property type="entry name" value="AS_cat/multimer_dom_body"/>
</dbReference>
<dbReference type="InterPro" id="IPR014729">
    <property type="entry name" value="Rossmann-like_a/b/a_fold"/>
</dbReference>
<dbReference type="NCBIfam" id="TIGR00032">
    <property type="entry name" value="argG"/>
    <property type="match status" value="1"/>
</dbReference>
<dbReference type="NCBIfam" id="NF001770">
    <property type="entry name" value="PRK00509.1"/>
    <property type="match status" value="1"/>
</dbReference>
<dbReference type="PANTHER" id="PTHR11587">
    <property type="entry name" value="ARGININOSUCCINATE SYNTHASE"/>
    <property type="match status" value="1"/>
</dbReference>
<dbReference type="PANTHER" id="PTHR11587:SF2">
    <property type="entry name" value="ARGININOSUCCINATE SYNTHASE"/>
    <property type="match status" value="1"/>
</dbReference>
<dbReference type="Pfam" id="PF20979">
    <property type="entry name" value="Arginosuc_syn_C"/>
    <property type="match status" value="1"/>
</dbReference>
<dbReference type="Pfam" id="PF00764">
    <property type="entry name" value="Arginosuc_synth"/>
    <property type="match status" value="1"/>
</dbReference>
<dbReference type="SUPFAM" id="SSF52402">
    <property type="entry name" value="Adenine nucleotide alpha hydrolases-like"/>
    <property type="match status" value="1"/>
</dbReference>
<dbReference type="SUPFAM" id="SSF69864">
    <property type="entry name" value="Argininosuccinate synthetase, C-terminal domain"/>
    <property type="match status" value="1"/>
</dbReference>
<dbReference type="PROSITE" id="PS00564">
    <property type="entry name" value="ARGININOSUCCIN_SYN_1"/>
    <property type="match status" value="1"/>
</dbReference>
<dbReference type="PROSITE" id="PS00565">
    <property type="entry name" value="ARGININOSUCCIN_SYN_2"/>
    <property type="match status" value="1"/>
</dbReference>
<keyword id="KW-0028">Amino-acid biosynthesis</keyword>
<keyword id="KW-0055">Arginine biosynthesis</keyword>
<keyword id="KW-0067">ATP-binding</keyword>
<keyword id="KW-0963">Cytoplasm</keyword>
<keyword id="KW-0436">Ligase</keyword>
<keyword id="KW-0547">Nucleotide-binding</keyword>
<comment type="catalytic activity">
    <reaction evidence="1">
        <text>L-citrulline + L-aspartate + ATP = 2-(N(omega)-L-arginino)succinate + AMP + diphosphate + H(+)</text>
        <dbReference type="Rhea" id="RHEA:10932"/>
        <dbReference type="ChEBI" id="CHEBI:15378"/>
        <dbReference type="ChEBI" id="CHEBI:29991"/>
        <dbReference type="ChEBI" id="CHEBI:30616"/>
        <dbReference type="ChEBI" id="CHEBI:33019"/>
        <dbReference type="ChEBI" id="CHEBI:57472"/>
        <dbReference type="ChEBI" id="CHEBI:57743"/>
        <dbReference type="ChEBI" id="CHEBI:456215"/>
        <dbReference type="EC" id="6.3.4.5"/>
    </reaction>
</comment>
<comment type="pathway">
    <text evidence="1">Amino-acid biosynthesis; L-arginine biosynthesis; L-arginine from L-ornithine and carbamoyl phosphate: step 2/3.</text>
</comment>
<comment type="subunit">
    <text evidence="1">Homotetramer.</text>
</comment>
<comment type="subcellular location">
    <subcellularLocation>
        <location evidence="1">Cytoplasm</location>
    </subcellularLocation>
</comment>
<comment type="similarity">
    <text evidence="1">Belongs to the argininosuccinate synthase family. Type 1 subfamily.</text>
</comment>
<proteinExistence type="inferred from homology"/>
<organism>
    <name type="scientific">Staphylococcus aureus (strain Newman)</name>
    <dbReference type="NCBI Taxonomy" id="426430"/>
    <lineage>
        <taxon>Bacteria</taxon>
        <taxon>Bacillati</taxon>
        <taxon>Bacillota</taxon>
        <taxon>Bacilli</taxon>
        <taxon>Bacillales</taxon>
        <taxon>Staphylococcaceae</taxon>
        <taxon>Staphylococcus</taxon>
    </lineage>
</organism>
<sequence>MKEKIVLAYSGGLDTSVAVQWLIDKGYDVVACCLDVGEGKDLDIVYKKALDMGAVECHIIDATKEFSDEYVSYAIKGNLMYENAYPLVSALSRPLIAKKLVEIAEKTNSVGIAHGCTGKGNDQVRFEVAIKALNPSLKAFAPVREWAWSREEEIDYAIKHNIPVSINHDSPYSIDQNLWGRANECGILEDPYAAPPEDAFDLTNALEETPDTADEIILTFDKGIPVQIDGKTYELDDLILTLNALAGKHGIGRIDHVENRLVGIKSREIYEAPAAEVILKAHKALETITLTKDVAHFKPIIEKQFAEQLYNGLWFSPLTDSLKLFIDSTQQYVSGDVRIKLFKGNAIVNGRKSPYTLYDEKLATYTKEDAFNQDAAVGFIDIYGLPTQVNAMLHGGYSNEQ</sequence>
<accession>A6QFH2</accession>
<protein>
    <recommendedName>
        <fullName evidence="1">Argininosuccinate synthase</fullName>
        <ecNumber evidence="1">6.3.4.5</ecNumber>
    </recommendedName>
    <alternativeName>
        <fullName evidence="1">Citrulline--aspartate ligase</fullName>
    </alternativeName>
</protein>
<evidence type="ECO:0000255" key="1">
    <source>
        <dbReference type="HAMAP-Rule" id="MF_00005"/>
    </source>
</evidence>